<organism>
    <name type="scientific">Bradyrhizobium diazoefficiens (strain JCM 10833 / BCRC 13528 / IAM 13628 / NBRC 14792 / USDA 110)</name>
    <dbReference type="NCBI Taxonomy" id="224911"/>
    <lineage>
        <taxon>Bacteria</taxon>
        <taxon>Pseudomonadati</taxon>
        <taxon>Pseudomonadota</taxon>
        <taxon>Alphaproteobacteria</taxon>
        <taxon>Hyphomicrobiales</taxon>
        <taxon>Nitrobacteraceae</taxon>
        <taxon>Bradyrhizobium</taxon>
    </lineage>
</organism>
<protein>
    <recommendedName>
        <fullName>Chaperone protein ClpB</fullName>
    </recommendedName>
</protein>
<evidence type="ECO:0000250" key="1"/>
<evidence type="ECO:0000255" key="2">
    <source>
        <dbReference type="PROSITE-ProRule" id="PRU01251"/>
    </source>
</evidence>
<evidence type="ECO:0000305" key="3"/>
<name>CLPB_BRADU</name>
<reference key="1">
    <citation type="journal article" date="2002" name="DNA Res.">
        <title>Complete genomic sequence of nitrogen-fixing symbiotic bacterium Bradyrhizobium japonicum USDA110.</title>
        <authorList>
            <person name="Kaneko T."/>
            <person name="Nakamura Y."/>
            <person name="Sato S."/>
            <person name="Minamisawa K."/>
            <person name="Uchiumi T."/>
            <person name="Sasamoto S."/>
            <person name="Watanabe A."/>
            <person name="Idesawa K."/>
            <person name="Iriguchi M."/>
            <person name="Kawashima K."/>
            <person name="Kohara M."/>
            <person name="Matsumoto M."/>
            <person name="Shimpo S."/>
            <person name="Tsuruoka H."/>
            <person name="Wada T."/>
            <person name="Yamada M."/>
            <person name="Tabata S."/>
        </authorList>
    </citation>
    <scope>NUCLEOTIDE SEQUENCE [LARGE SCALE GENOMIC DNA]</scope>
    <source>
        <strain>JCM 10833 / BCRC 13528 / IAM 13628 / NBRC 14792 / USDA 110</strain>
    </source>
</reference>
<proteinExistence type="inferred from homology"/>
<feature type="chain" id="PRO_0000191098" description="Chaperone protein ClpB">
    <location>
        <begin position="1"/>
        <end position="879"/>
    </location>
</feature>
<feature type="domain" description="Clp R" evidence="2">
    <location>
        <begin position="3"/>
        <end position="148"/>
    </location>
</feature>
<feature type="region of interest" description="Repeat 1" evidence="2">
    <location>
        <begin position="6"/>
        <end position="71"/>
    </location>
</feature>
<feature type="region of interest" description="Repeat 2" evidence="2">
    <location>
        <begin position="84"/>
        <end position="148"/>
    </location>
</feature>
<feature type="region of interest" description="NBD1" evidence="1">
    <location>
        <begin position="161"/>
        <end position="342"/>
    </location>
</feature>
<feature type="region of interest" description="Linker" evidence="1">
    <location>
        <begin position="343"/>
        <end position="546"/>
    </location>
</feature>
<feature type="region of interest" description="NBD2" evidence="1">
    <location>
        <begin position="556"/>
        <end position="766"/>
    </location>
</feature>
<feature type="region of interest" description="C-terminal" evidence="1">
    <location>
        <begin position="767"/>
        <end position="879"/>
    </location>
</feature>
<feature type="coiled-coil region" evidence="1">
    <location>
        <begin position="393"/>
        <end position="525"/>
    </location>
</feature>
<feature type="binding site" evidence="1">
    <location>
        <begin position="208"/>
        <end position="215"/>
    </location>
    <ligand>
        <name>ATP</name>
        <dbReference type="ChEBI" id="CHEBI:30616"/>
        <label>1</label>
    </ligand>
</feature>
<feature type="binding site" evidence="1">
    <location>
        <begin position="606"/>
        <end position="613"/>
    </location>
    <ligand>
        <name>ATP</name>
        <dbReference type="ChEBI" id="CHEBI:30616"/>
        <label>2</label>
    </ligand>
</feature>
<sequence>MNIEKYTERSRGFIQSAQSLAVREGHQQFSTLHVLKVLLDDNEGLAAGLIDRAGGNSRAILKATEDALNKVPKVSGGGAGQIYLAPELARTFDAAEKAGEKAGDSFVTVERLLLGLTLEKTSEAGTILSKGGVTPQNLNAAIEALRKGRTADSATAENAYDALKKYARDLTQAARDGKLDPVIGRDEEIRRTIQVLSRRTKNNPVLIGEPGVGKTAIAEGLALRIVNGDVPESLKDKKLLSLDLGALIAGAKYRGEFEERLKAVLQEVTGSEGTFILFIDEMHTLIGAGKGDGAMDASNLLKPALARGELHCIGATTLDEYQKHVEKDAALARRFQPIFVSEPSVEDTISILRGLKDKYEQHHGVRITDSALVASATLSNRYITDRFLPDKAIDLMDEAAARLKMQVDSKPEELDSMDREIIRLKIEQEALKKESDAGSKSRLQTLEKELVELEEKSASLTARWSAEKNKLSDAQKLKAELDGLRVELANAQRRGEFQKAGELAYGRIPELERQLADIEAKENSGEMMEEAVTANHIAQVVSRWTGVPVDKMLEGEKDKLLKMEDSLGKRVVGQAEAVHAVATAVRRSRAGLQDPNRPMGSFMFLGPTGVGKTELTKALAEYLFNDETAMVRLDMSEYMEKHSVSRLIGAPPGYVGYDEGGALTEAVRRRPYQVVLFDEIEKAHPDVFNVLLQVLDDGRLTDGQGRTVDFRNTLIIMTSNLGSEFLVNQPEGEDTSAVREQVMGMVRGHFRPEFLNRVDEIILFHRLQRSEMGRIVEIQFARLQKLLTDRKIVLTLDGAARDWLAAKGWDPAYGARPLKRVIQRYLQDPLAEMILAGDVKDGDNVAISSEGNVLTFNGKAPQTAEIAQFEAPASKRKLN</sequence>
<accession>Q89UL2</accession>
<keyword id="KW-0067">ATP-binding</keyword>
<keyword id="KW-0143">Chaperone</keyword>
<keyword id="KW-0175">Coiled coil</keyword>
<keyword id="KW-0963">Cytoplasm</keyword>
<keyword id="KW-0547">Nucleotide-binding</keyword>
<keyword id="KW-1185">Reference proteome</keyword>
<keyword id="KW-0677">Repeat</keyword>
<keyword id="KW-0346">Stress response</keyword>
<comment type="function">
    <text evidence="1">Part of a stress-induced multi-chaperone system, it is involved in the recovery of the cell from heat-induced damage, in cooperation with DnaK, DnaJ and GrpE. Acts before DnaK, in the processing of protein aggregates. Protein binding stimulates the ATPase activity; ATP hydrolysis unfolds the denatured protein aggregates, which probably helps expose new hydrophobic binding sites on the surface of ClpB-bound aggregates, contributing to the solubilization and refolding of denatured protein aggregates by DnaK (By similarity).</text>
</comment>
<comment type="subunit">
    <text evidence="1">Homohexamer. The oligomerization is ATP-dependent (By similarity).</text>
</comment>
<comment type="subcellular location">
    <subcellularLocation>
        <location evidence="3">Cytoplasm</location>
    </subcellularLocation>
</comment>
<comment type="domain">
    <text evidence="1">The Clp repeat (R) domain probably functions as a substrate-discriminating domain, recruiting aggregated proteins to the ClpB hexamer and/or stabilizing bound proteins. The NBD2 domain is responsible for oligomerization, whereas the NBD1 domain stabilizes the hexamer probably in an ATP-dependent manner. The movement of the coiled-coil domain is essential for ClpB ability to rescue proteins from an aggregated state, probably by pulling apart large aggregated proteins, which are bound between the coiled-coils motifs of adjacent ClpB subunits in the functional hexamer (By similarity).</text>
</comment>
<comment type="similarity">
    <text evidence="3">Belongs to the ClpA/ClpB family.</text>
</comment>
<gene>
    <name type="primary">clpB</name>
    <name type="ordered locus">blr1404</name>
</gene>
<dbReference type="EMBL" id="BA000040">
    <property type="protein sequence ID" value="BAC46669.1"/>
    <property type="molecule type" value="Genomic_DNA"/>
</dbReference>
<dbReference type="RefSeq" id="NP_768044.1">
    <property type="nucleotide sequence ID" value="NC_004463.1"/>
</dbReference>
<dbReference type="RefSeq" id="WP_011084221.1">
    <property type="nucleotide sequence ID" value="NC_004463.1"/>
</dbReference>
<dbReference type="SMR" id="Q89UL2"/>
<dbReference type="FunCoup" id="Q89UL2">
    <property type="interactions" value="694"/>
</dbReference>
<dbReference type="STRING" id="224911.AAV28_03935"/>
<dbReference type="EnsemblBacteria" id="BAC46669">
    <property type="protein sequence ID" value="BAC46669"/>
    <property type="gene ID" value="BAC46669"/>
</dbReference>
<dbReference type="GeneID" id="46488673"/>
<dbReference type="KEGG" id="bja:blr1404"/>
<dbReference type="PATRIC" id="fig|224911.44.peg.828"/>
<dbReference type="eggNOG" id="COG0542">
    <property type="taxonomic scope" value="Bacteria"/>
</dbReference>
<dbReference type="HOGENOM" id="CLU_005070_4_1_5"/>
<dbReference type="InParanoid" id="Q89UL2"/>
<dbReference type="OrthoDB" id="9803641at2"/>
<dbReference type="PhylomeDB" id="Q89UL2"/>
<dbReference type="Proteomes" id="UP000002526">
    <property type="component" value="Chromosome"/>
</dbReference>
<dbReference type="GO" id="GO:0005737">
    <property type="term" value="C:cytoplasm"/>
    <property type="evidence" value="ECO:0000318"/>
    <property type="project" value="GO_Central"/>
</dbReference>
<dbReference type="GO" id="GO:0005524">
    <property type="term" value="F:ATP binding"/>
    <property type="evidence" value="ECO:0007669"/>
    <property type="project" value="UniProtKB-KW"/>
</dbReference>
<dbReference type="GO" id="GO:0016887">
    <property type="term" value="F:ATP hydrolysis activity"/>
    <property type="evidence" value="ECO:0000318"/>
    <property type="project" value="GO_Central"/>
</dbReference>
<dbReference type="GO" id="GO:0034605">
    <property type="term" value="P:cellular response to heat"/>
    <property type="evidence" value="ECO:0000318"/>
    <property type="project" value="GO_Central"/>
</dbReference>
<dbReference type="GO" id="GO:0042026">
    <property type="term" value="P:protein refolding"/>
    <property type="evidence" value="ECO:0007669"/>
    <property type="project" value="InterPro"/>
</dbReference>
<dbReference type="CDD" id="cd00009">
    <property type="entry name" value="AAA"/>
    <property type="match status" value="1"/>
</dbReference>
<dbReference type="CDD" id="cd19499">
    <property type="entry name" value="RecA-like_ClpB_Hsp104-like"/>
    <property type="match status" value="1"/>
</dbReference>
<dbReference type="FunFam" id="3.40.50.300:FF:000120">
    <property type="entry name" value="ATP-dependent chaperone ClpB"/>
    <property type="match status" value="1"/>
</dbReference>
<dbReference type="FunFam" id="3.40.50.300:FF:000025">
    <property type="entry name" value="ATP-dependent Clp protease subunit"/>
    <property type="match status" value="1"/>
</dbReference>
<dbReference type="FunFam" id="3.40.50.300:FF:000010">
    <property type="entry name" value="Chaperone clpB 1, putative"/>
    <property type="match status" value="1"/>
</dbReference>
<dbReference type="Gene3D" id="1.10.8.60">
    <property type="match status" value="1"/>
</dbReference>
<dbReference type="Gene3D" id="1.10.1780.10">
    <property type="entry name" value="Clp, N-terminal domain"/>
    <property type="match status" value="1"/>
</dbReference>
<dbReference type="Gene3D" id="3.40.50.300">
    <property type="entry name" value="P-loop containing nucleotide triphosphate hydrolases"/>
    <property type="match status" value="3"/>
</dbReference>
<dbReference type="InterPro" id="IPR003593">
    <property type="entry name" value="AAA+_ATPase"/>
</dbReference>
<dbReference type="InterPro" id="IPR003959">
    <property type="entry name" value="ATPase_AAA_core"/>
</dbReference>
<dbReference type="InterPro" id="IPR017730">
    <property type="entry name" value="Chaperonin_ClpB"/>
</dbReference>
<dbReference type="InterPro" id="IPR019489">
    <property type="entry name" value="Clp_ATPase_C"/>
</dbReference>
<dbReference type="InterPro" id="IPR036628">
    <property type="entry name" value="Clp_N_dom_sf"/>
</dbReference>
<dbReference type="InterPro" id="IPR004176">
    <property type="entry name" value="Clp_R_dom"/>
</dbReference>
<dbReference type="InterPro" id="IPR001270">
    <property type="entry name" value="ClpA/B"/>
</dbReference>
<dbReference type="InterPro" id="IPR018368">
    <property type="entry name" value="ClpA/B_CS1"/>
</dbReference>
<dbReference type="InterPro" id="IPR028299">
    <property type="entry name" value="ClpA/B_CS2"/>
</dbReference>
<dbReference type="InterPro" id="IPR041546">
    <property type="entry name" value="ClpA/ClpB_AAA_lid"/>
</dbReference>
<dbReference type="InterPro" id="IPR050130">
    <property type="entry name" value="ClpA_ClpB"/>
</dbReference>
<dbReference type="InterPro" id="IPR027417">
    <property type="entry name" value="P-loop_NTPase"/>
</dbReference>
<dbReference type="NCBIfam" id="TIGR03346">
    <property type="entry name" value="chaperone_ClpB"/>
    <property type="match status" value="1"/>
</dbReference>
<dbReference type="PANTHER" id="PTHR11638">
    <property type="entry name" value="ATP-DEPENDENT CLP PROTEASE"/>
    <property type="match status" value="1"/>
</dbReference>
<dbReference type="PANTHER" id="PTHR11638:SF18">
    <property type="entry name" value="HEAT SHOCK PROTEIN 104"/>
    <property type="match status" value="1"/>
</dbReference>
<dbReference type="Pfam" id="PF00004">
    <property type="entry name" value="AAA"/>
    <property type="match status" value="1"/>
</dbReference>
<dbReference type="Pfam" id="PF07724">
    <property type="entry name" value="AAA_2"/>
    <property type="match status" value="1"/>
</dbReference>
<dbReference type="Pfam" id="PF17871">
    <property type="entry name" value="AAA_lid_9"/>
    <property type="match status" value="1"/>
</dbReference>
<dbReference type="Pfam" id="PF02861">
    <property type="entry name" value="Clp_N"/>
    <property type="match status" value="2"/>
</dbReference>
<dbReference type="Pfam" id="PF10431">
    <property type="entry name" value="ClpB_D2-small"/>
    <property type="match status" value="1"/>
</dbReference>
<dbReference type="PRINTS" id="PR00300">
    <property type="entry name" value="CLPPROTEASEA"/>
</dbReference>
<dbReference type="SMART" id="SM00382">
    <property type="entry name" value="AAA"/>
    <property type="match status" value="2"/>
</dbReference>
<dbReference type="SMART" id="SM01086">
    <property type="entry name" value="ClpB_D2-small"/>
    <property type="match status" value="1"/>
</dbReference>
<dbReference type="SUPFAM" id="SSF81923">
    <property type="entry name" value="Double Clp-N motif"/>
    <property type="match status" value="1"/>
</dbReference>
<dbReference type="SUPFAM" id="SSF52540">
    <property type="entry name" value="P-loop containing nucleoside triphosphate hydrolases"/>
    <property type="match status" value="2"/>
</dbReference>
<dbReference type="PROSITE" id="PS51903">
    <property type="entry name" value="CLP_R"/>
    <property type="match status" value="1"/>
</dbReference>
<dbReference type="PROSITE" id="PS00870">
    <property type="entry name" value="CLPAB_1"/>
    <property type="match status" value="1"/>
</dbReference>
<dbReference type="PROSITE" id="PS00871">
    <property type="entry name" value="CLPAB_2"/>
    <property type="match status" value="1"/>
</dbReference>